<feature type="chain" id="PRO_0000331584" description="Protein HGH1 homolog">
    <location>
        <begin position="1"/>
        <end position="368"/>
    </location>
</feature>
<name>HGH1_DROPS</name>
<accession>Q297A7</accession>
<evidence type="ECO:0000305" key="1"/>
<comment type="similarity">
    <text evidence="1">Belongs to the HGH1 family.</text>
</comment>
<gene>
    <name type="ORF">GA19338</name>
</gene>
<keyword id="KW-1185">Reference proteome</keyword>
<reference key="1">
    <citation type="journal article" date="2005" name="Genome Res.">
        <title>Comparative genome sequencing of Drosophila pseudoobscura: chromosomal, gene, and cis-element evolution.</title>
        <authorList>
            <person name="Richards S."/>
            <person name="Liu Y."/>
            <person name="Bettencourt B.R."/>
            <person name="Hradecky P."/>
            <person name="Letovsky S."/>
            <person name="Nielsen R."/>
            <person name="Thornton K."/>
            <person name="Hubisz M.J."/>
            <person name="Chen R."/>
            <person name="Meisel R.P."/>
            <person name="Couronne O."/>
            <person name="Hua S."/>
            <person name="Smith M.A."/>
            <person name="Zhang P."/>
            <person name="Liu J."/>
            <person name="Bussemaker H.J."/>
            <person name="van Batenburg M.F."/>
            <person name="Howells S.L."/>
            <person name="Scherer S.E."/>
            <person name="Sodergren E."/>
            <person name="Matthews B.B."/>
            <person name="Crosby M.A."/>
            <person name="Schroeder A.J."/>
            <person name="Ortiz-Barrientos D."/>
            <person name="Rives C.M."/>
            <person name="Metzker M.L."/>
            <person name="Muzny D.M."/>
            <person name="Scott G."/>
            <person name="Steffen D."/>
            <person name="Wheeler D.A."/>
            <person name="Worley K.C."/>
            <person name="Havlak P."/>
            <person name="Durbin K.J."/>
            <person name="Egan A."/>
            <person name="Gill R."/>
            <person name="Hume J."/>
            <person name="Morgan M.B."/>
            <person name="Miner G."/>
            <person name="Hamilton C."/>
            <person name="Huang Y."/>
            <person name="Waldron L."/>
            <person name="Verduzco D."/>
            <person name="Clerc-Blankenburg K.P."/>
            <person name="Dubchak I."/>
            <person name="Noor M.A.F."/>
            <person name="Anderson W."/>
            <person name="White K.P."/>
            <person name="Clark A.G."/>
            <person name="Schaeffer S.W."/>
            <person name="Gelbart W.M."/>
            <person name="Weinstock G.M."/>
            <person name="Gibbs R.A."/>
        </authorList>
    </citation>
    <scope>NUCLEOTIDE SEQUENCE [LARGE SCALE GENOMIC DNA]</scope>
    <source>
        <strain>MV2-25 / Tucson 14011-0121.94</strain>
    </source>
</reference>
<protein>
    <recommendedName>
        <fullName>Protein HGH1 homolog</fullName>
    </recommendedName>
</protein>
<dbReference type="EMBL" id="CM000070">
    <property type="protein sequence ID" value="EAL28299.1"/>
    <property type="molecule type" value="Genomic_DNA"/>
</dbReference>
<dbReference type="SMR" id="Q297A7"/>
<dbReference type="FunCoup" id="Q297A7">
    <property type="interactions" value="1697"/>
</dbReference>
<dbReference type="STRING" id="46245.Q297A7"/>
<dbReference type="EnsemblMetazoa" id="FBtr0285823">
    <property type="protein sequence ID" value="FBpp0284261"/>
    <property type="gene ID" value="FBgn0079335"/>
</dbReference>
<dbReference type="KEGG" id="dpo:4802187"/>
<dbReference type="eggNOG" id="KOG2973">
    <property type="taxonomic scope" value="Eukaryota"/>
</dbReference>
<dbReference type="HOGENOM" id="CLU_037769_3_0_1"/>
<dbReference type="InParanoid" id="Q297A7"/>
<dbReference type="OMA" id="MCILLTN"/>
<dbReference type="PhylomeDB" id="Q297A7"/>
<dbReference type="Proteomes" id="UP000001819">
    <property type="component" value="Chromosome 2"/>
</dbReference>
<dbReference type="Bgee" id="FBgn0079335">
    <property type="expression patterns" value="Expressed in female reproductive system and 2 other cell types or tissues"/>
</dbReference>
<dbReference type="Gene3D" id="1.25.10.10">
    <property type="entry name" value="Leucine-rich Repeat Variant"/>
    <property type="match status" value="1"/>
</dbReference>
<dbReference type="InterPro" id="IPR011989">
    <property type="entry name" value="ARM-like"/>
</dbReference>
<dbReference type="InterPro" id="IPR016024">
    <property type="entry name" value="ARM-type_fold"/>
</dbReference>
<dbReference type="InterPro" id="IPR039717">
    <property type="entry name" value="Hgh1"/>
</dbReference>
<dbReference type="InterPro" id="IPR007206">
    <property type="entry name" value="Protein_HGH1_C"/>
</dbReference>
<dbReference type="InterPro" id="IPR007205">
    <property type="entry name" value="Protein_HGH1_N"/>
</dbReference>
<dbReference type="PANTHER" id="PTHR13387">
    <property type="entry name" value="PROTEIN HGH1 HOMOLOG"/>
    <property type="match status" value="1"/>
</dbReference>
<dbReference type="PANTHER" id="PTHR13387:SF9">
    <property type="entry name" value="PROTEIN HGH1 HOMOLOG"/>
    <property type="match status" value="1"/>
</dbReference>
<dbReference type="Pfam" id="PF04063">
    <property type="entry name" value="DUF383"/>
    <property type="match status" value="1"/>
</dbReference>
<dbReference type="Pfam" id="PF04064">
    <property type="entry name" value="DUF384"/>
    <property type="match status" value="1"/>
</dbReference>
<dbReference type="SUPFAM" id="SSF48371">
    <property type="entry name" value="ARM repeat"/>
    <property type="match status" value="1"/>
</dbReference>
<proteinExistence type="inferred from homology"/>
<organism>
    <name type="scientific">Drosophila pseudoobscura pseudoobscura</name>
    <name type="common">Fruit fly</name>
    <dbReference type="NCBI Taxonomy" id="46245"/>
    <lineage>
        <taxon>Eukaryota</taxon>
        <taxon>Metazoa</taxon>
        <taxon>Ecdysozoa</taxon>
        <taxon>Arthropoda</taxon>
        <taxon>Hexapoda</taxon>
        <taxon>Insecta</taxon>
        <taxon>Pterygota</taxon>
        <taxon>Neoptera</taxon>
        <taxon>Endopterygota</taxon>
        <taxon>Diptera</taxon>
        <taxon>Brachycera</taxon>
        <taxon>Muscomorpha</taxon>
        <taxon>Ephydroidea</taxon>
        <taxon>Drosophilidae</taxon>
        <taxon>Drosophila</taxon>
        <taxon>Sophophora</taxon>
    </lineage>
</organism>
<sequence>MEVVSELVQFMQPNQRLDLKAVALTHVLGLTGSAEGKAAILALDDMLMAIFGLTFDDNHTVAKDAVLSLINLTADEECATKVFHLAKRIQPPFAIVEVAATQISDEQSPLADPWSMVLSNLTRVESLVHEILDILERGEQTLPRLAKAFAQLDYNKKKARLHYLAPIFCNLTQVARGRELCCHARYQLLEKLLPFASYEENVVRRGGTIGILKNVCFDAVYHGVILGEDDNILVAILQPLCGPEEFSDEENDMLPIELQYLPESKTRETDPDLRKMLLECLLQLCSTRRSREILRAKGVYEILREYHKWEARVGLDRDCLLACENVVDILIKKEEEIGLDNYKNVEVPAEQAEKFVQEDVEYVKSLLD</sequence>